<keyword id="KW-0325">Glycoprotein</keyword>
<keyword id="KW-0333">Golgi apparatus</keyword>
<keyword id="KW-0472">Membrane</keyword>
<keyword id="KW-0653">Protein transport</keyword>
<keyword id="KW-0675">Receptor</keyword>
<keyword id="KW-1185">Reference proteome</keyword>
<keyword id="KW-0677">Repeat</keyword>
<keyword id="KW-0732">Signal</keyword>
<keyword id="KW-0812">Transmembrane</keyword>
<keyword id="KW-1133">Transmembrane helix</keyword>
<keyword id="KW-0813">Transport</keyword>
<name>VPS10_ASPFU</name>
<protein>
    <recommendedName>
        <fullName>Vacuolar protein sorting/targeting protein 10</fullName>
    </recommendedName>
    <alternativeName>
        <fullName>Carboxypeptidase Y receptor</fullName>
        <shortName>CPY receptor</shortName>
    </alternativeName>
    <alternativeName>
        <fullName>Sortilin vps10</fullName>
    </alternativeName>
    <alternativeName>
        <fullName>Vacuolar carboxypeptidase sorting receptor vps10</fullName>
    </alternativeName>
</protein>
<evidence type="ECO:0000250" key="1"/>
<evidence type="ECO:0000255" key="2"/>
<evidence type="ECO:0000305" key="3"/>
<accession>Q4WBM1</accession>
<proteinExistence type="inferred from homology"/>
<sequence>MITRWLLITSFLALAILSLSSAAKKSEPEITSSSFDNEPFSLSYFEDTETILMNTRDGNLFRSFDGGKAWEQVDGPDGKMKKAVRSIWQHPFDKNKAYALGANRRHWVTKDQAKTWESFEVDGYAAAQHEPLIFHGWDSAKVIFQSDECMGRLCIVKSYYTTDDFKTVSPLRVSAGGCLWAVGHPQFADGLNLEDELRDRVLCIVPGLKVPSAHANRLVYSDDFFRSDAEGTELNIQHGRPVSGILSAAAVKKFFVTAAKSQGTNELALYVTLDTKAWHRADFGGHRVEQDGYTLLESTNYSMQVDVLTSPSSNTGVLFTSNSNGTYFTRNVEHTNRDRFGHVDFEKIADIQGIVLVNTVKNWDKVESENEKKVVSSISFDDGRTFQSLKVGDKQLHLHSVTTFANTGRVFSSPAPGLVMGVGNTGDHLKKYSEGSLYVSDDAGVTWRHALDGPFKYEFGDQGSVIMAVSDKGTTDEIQFSIDHGKEWHSTKLQHKINPKLLTTTPDSTSLTFLLVGSEESSGTKHVVYSIDFHGLHERKCEKDDFEKWAARLNENGEPDCLMGHQQFFNRRKANADCFVDEEFKDPQPIFEPCKCSFEDFECDFNFVRSEDGKSCVPTAPLVPPVGRCQKQTDTFMGPSGWRLIPGNTCTREGGENLDKVVERPCKDVVSAPSHDKPMAQKQVFNDARQFSEQYYYLERQASSSGDDETVIMLTSEGEFWVSHDHGKNWEQPLKGVKIAAIVPHPYYSDGAFLLTRDKQAFWTVDRAYTFKSFEAPIPPNQEGLPVLSFHPHYKDWLIWTGAVDCSHGDCHSDAYFSKNRGENWDLLLRYVGKCEFESRENRPGSEKLIFCQQYENENKKNHLQLLSSENLFSDSHVHFNDAIRYATMSEYIIVASRDPDNPDSLIASVSVDGKTFARAEFPSNVDVPVKTAFTVLDSSTHAVFLHVTVSDVKGAEYGSIIKSNSNGTSYVLSLNAASRNEWGYVDFEKMQGLEGVAVVNIISNVDAVQKKGPAAKKLKTMITHNDGGQWMLLPPPAKDADGKNFGCSVKDGKGSDQCSLHLHGYTERRDPRDTFSSGSAIGLMMGIGNVGAYLSGKDEADTFMTRDGGITWKSVKKGRYMWEYGDAGSVIVIVPELRPTKVLYYSLDEGDNWEPYEFSEVEMHIYRLSTVPSDTSKNFLLWGKEMESNRLATINVDFSGLRKKSCILVEDGQESDDYYLWEPKHPFQEDNCLFGHVEQYHRKKPSSQCWNNWREPHVHSIGRNCTCTRADYECNYNYEPQNDGSCALVPGLPKPDALAVCREDPDRVEYWEPTAYRRIPQTTCSGGLILDHVVSKPCPSKEKEYEKKHGISGTGLFFAIMIPLVAAAGVGYYVYARWDGKFGQIRLGENAGTYEGLLSRESPIVTAPIAIIAGIVAVIRALPLLAMSLWRSASGYVRLGRNRAYSRPYASRGSFAARRGDYTSVVDDEDELLGVDDAEIDDDDEL</sequence>
<reference key="1">
    <citation type="journal article" date="2005" name="Nature">
        <title>Genomic sequence of the pathogenic and allergenic filamentous fungus Aspergillus fumigatus.</title>
        <authorList>
            <person name="Nierman W.C."/>
            <person name="Pain A."/>
            <person name="Anderson M.J."/>
            <person name="Wortman J.R."/>
            <person name="Kim H.S."/>
            <person name="Arroyo J."/>
            <person name="Berriman M."/>
            <person name="Abe K."/>
            <person name="Archer D.B."/>
            <person name="Bermejo C."/>
            <person name="Bennett J.W."/>
            <person name="Bowyer P."/>
            <person name="Chen D."/>
            <person name="Collins M."/>
            <person name="Coulsen R."/>
            <person name="Davies R."/>
            <person name="Dyer P.S."/>
            <person name="Farman M.L."/>
            <person name="Fedorova N."/>
            <person name="Fedorova N.D."/>
            <person name="Feldblyum T.V."/>
            <person name="Fischer R."/>
            <person name="Fosker N."/>
            <person name="Fraser A."/>
            <person name="Garcia J.L."/>
            <person name="Garcia M.J."/>
            <person name="Goble A."/>
            <person name="Goldman G.H."/>
            <person name="Gomi K."/>
            <person name="Griffith-Jones S."/>
            <person name="Gwilliam R."/>
            <person name="Haas B.J."/>
            <person name="Haas H."/>
            <person name="Harris D.E."/>
            <person name="Horiuchi H."/>
            <person name="Huang J."/>
            <person name="Humphray S."/>
            <person name="Jimenez J."/>
            <person name="Keller N."/>
            <person name="Khouri H."/>
            <person name="Kitamoto K."/>
            <person name="Kobayashi T."/>
            <person name="Konzack S."/>
            <person name="Kulkarni R."/>
            <person name="Kumagai T."/>
            <person name="Lafton A."/>
            <person name="Latge J.-P."/>
            <person name="Li W."/>
            <person name="Lord A."/>
            <person name="Lu C."/>
            <person name="Majoros W.H."/>
            <person name="May G.S."/>
            <person name="Miller B.L."/>
            <person name="Mohamoud Y."/>
            <person name="Molina M."/>
            <person name="Monod M."/>
            <person name="Mouyna I."/>
            <person name="Mulligan S."/>
            <person name="Murphy L.D."/>
            <person name="O'Neil S."/>
            <person name="Paulsen I."/>
            <person name="Penalva M.A."/>
            <person name="Pertea M."/>
            <person name="Price C."/>
            <person name="Pritchard B.L."/>
            <person name="Quail M.A."/>
            <person name="Rabbinowitsch E."/>
            <person name="Rawlins N."/>
            <person name="Rajandream M.A."/>
            <person name="Reichard U."/>
            <person name="Renauld H."/>
            <person name="Robson G.D."/>
            <person name="Rodriguez de Cordoba S."/>
            <person name="Rodriguez-Pena J.M."/>
            <person name="Ronning C.M."/>
            <person name="Rutter S."/>
            <person name="Salzberg S.L."/>
            <person name="Sanchez M."/>
            <person name="Sanchez-Ferrero J.C."/>
            <person name="Saunders D."/>
            <person name="Seeger K."/>
            <person name="Squares R."/>
            <person name="Squares S."/>
            <person name="Takeuchi M."/>
            <person name="Tekaia F."/>
            <person name="Turner G."/>
            <person name="Vazquez de Aldana C.R."/>
            <person name="Weidman J."/>
            <person name="White O."/>
            <person name="Woodward J.R."/>
            <person name="Yu J.-H."/>
            <person name="Fraser C.M."/>
            <person name="Galagan J.E."/>
            <person name="Asai K."/>
            <person name="Machida M."/>
            <person name="Hall N."/>
            <person name="Barrell B.G."/>
            <person name="Denning D.W."/>
        </authorList>
    </citation>
    <scope>NUCLEOTIDE SEQUENCE [LARGE SCALE GENOMIC DNA]</scope>
    <source>
        <strain>ATCC MYA-4609 / CBS 101355 / FGSC A1100 / Af293</strain>
    </source>
</reference>
<gene>
    <name type="primary">vps10</name>
    <name type="ORF">AFUA_8G02780</name>
</gene>
<comment type="function">
    <text evidence="1">Functions as a sorting receptor in the Golgi compartment required for the intracellular sorting and delivery of soluble vacuolar proteins, like carboxypeptidase Y (CPY) and proteinase A. Executes multiple rounds of sorting by cycling between the late Golgi and a prevacuolar endosome-like compartment (By similarity).</text>
</comment>
<comment type="subcellular location">
    <subcellularLocation>
        <location evidence="1">Golgi apparatus</location>
        <location evidence="1">trans-Golgi network membrane</location>
        <topology evidence="1">Multi-pass membrane protein</topology>
    </subcellularLocation>
    <subcellularLocation>
        <location evidence="1">Prevacuolar compartment membrane</location>
        <topology evidence="1">Multi-pass membrane protein</topology>
    </subcellularLocation>
    <text evidence="1">Cycles between the Golgi apparatus and the prevacuolar compartment.</text>
</comment>
<comment type="similarity">
    <text evidence="3">Belongs to the VPS10-related sortilin family.</text>
</comment>
<organism>
    <name type="scientific">Aspergillus fumigatus (strain ATCC MYA-4609 / CBS 101355 / FGSC A1100 / Af293)</name>
    <name type="common">Neosartorya fumigata</name>
    <dbReference type="NCBI Taxonomy" id="330879"/>
    <lineage>
        <taxon>Eukaryota</taxon>
        <taxon>Fungi</taxon>
        <taxon>Dikarya</taxon>
        <taxon>Ascomycota</taxon>
        <taxon>Pezizomycotina</taxon>
        <taxon>Eurotiomycetes</taxon>
        <taxon>Eurotiomycetidae</taxon>
        <taxon>Eurotiales</taxon>
        <taxon>Aspergillaceae</taxon>
        <taxon>Aspergillus</taxon>
        <taxon>Aspergillus subgen. Fumigati</taxon>
    </lineage>
</organism>
<dbReference type="EMBL" id="AAHF01000014">
    <property type="protein sequence ID" value="EAL84891.1"/>
    <property type="molecule type" value="Genomic_DNA"/>
</dbReference>
<dbReference type="RefSeq" id="XP_746929.1">
    <property type="nucleotide sequence ID" value="XM_741836.1"/>
</dbReference>
<dbReference type="SMR" id="Q4WBM1"/>
<dbReference type="FunCoup" id="Q4WBM1">
    <property type="interactions" value="189"/>
</dbReference>
<dbReference type="STRING" id="330879.Q4WBM1"/>
<dbReference type="GlyCosmos" id="Q4WBM1">
    <property type="glycosylation" value="4 sites, No reported glycans"/>
</dbReference>
<dbReference type="EnsemblFungi" id="EAL84891">
    <property type="protein sequence ID" value="EAL84891"/>
    <property type="gene ID" value="AFUA_8G02780"/>
</dbReference>
<dbReference type="GeneID" id="3504431"/>
<dbReference type="KEGG" id="afm:AFUA_8G02780"/>
<dbReference type="VEuPathDB" id="FungiDB:Afu8g02780"/>
<dbReference type="eggNOG" id="KOG3511">
    <property type="taxonomic scope" value="Eukaryota"/>
</dbReference>
<dbReference type="HOGENOM" id="CLU_000700_0_0_1"/>
<dbReference type="InParanoid" id="Q4WBM1"/>
<dbReference type="OMA" id="ATMSEFI"/>
<dbReference type="OrthoDB" id="443634at2759"/>
<dbReference type="Proteomes" id="UP000002530">
    <property type="component" value="Chromosome 8"/>
</dbReference>
<dbReference type="GO" id="GO:0005829">
    <property type="term" value="C:cytosol"/>
    <property type="evidence" value="ECO:0007669"/>
    <property type="project" value="GOC"/>
</dbReference>
<dbReference type="GO" id="GO:0005794">
    <property type="term" value="C:Golgi apparatus"/>
    <property type="evidence" value="ECO:0000318"/>
    <property type="project" value="GO_Central"/>
</dbReference>
<dbReference type="GO" id="GO:0016020">
    <property type="term" value="C:membrane"/>
    <property type="evidence" value="ECO:0000318"/>
    <property type="project" value="GO_Central"/>
</dbReference>
<dbReference type="GO" id="GO:0006895">
    <property type="term" value="P:Golgi to endosome transport"/>
    <property type="evidence" value="ECO:0000318"/>
    <property type="project" value="GO_Central"/>
</dbReference>
<dbReference type="GO" id="GO:0006896">
    <property type="term" value="P:Golgi to vacuole transport"/>
    <property type="evidence" value="ECO:0000318"/>
    <property type="project" value="GO_Central"/>
</dbReference>
<dbReference type="GO" id="GO:0006623">
    <property type="term" value="P:protein targeting to vacuole"/>
    <property type="evidence" value="ECO:0000318"/>
    <property type="project" value="GO_Central"/>
</dbReference>
<dbReference type="CDD" id="cd15482">
    <property type="entry name" value="Sialidase_non-viral"/>
    <property type="match status" value="1"/>
</dbReference>
<dbReference type="FunFam" id="2.10.70.80:FF:000006">
    <property type="entry name" value="Sortilin"/>
    <property type="match status" value="1"/>
</dbReference>
<dbReference type="FunFam" id="2.130.10.10:FF:000676">
    <property type="entry name" value="Sortilin"/>
    <property type="match status" value="1"/>
</dbReference>
<dbReference type="FunFam" id="3.30.60.270:FF:000005">
    <property type="entry name" value="Sortilin"/>
    <property type="match status" value="2"/>
</dbReference>
<dbReference type="FunFam" id="2.10.70.80:FF:000001">
    <property type="entry name" value="Sortilin-related VPS10 domain-containing receptor 1"/>
    <property type="match status" value="1"/>
</dbReference>
<dbReference type="Gene3D" id="2.10.70.80">
    <property type="match status" value="2"/>
</dbReference>
<dbReference type="Gene3D" id="3.30.60.270">
    <property type="match status" value="2"/>
</dbReference>
<dbReference type="Gene3D" id="2.130.10.10">
    <property type="entry name" value="YVTN repeat-like/Quinoprotein amine dehydrogenase"/>
    <property type="match status" value="1"/>
</dbReference>
<dbReference type="InterPro" id="IPR036278">
    <property type="entry name" value="Sialidase_sf"/>
</dbReference>
<dbReference type="InterPro" id="IPR031777">
    <property type="entry name" value="Sortilin_C"/>
</dbReference>
<dbReference type="InterPro" id="IPR031778">
    <property type="entry name" value="Sortilin_N"/>
</dbReference>
<dbReference type="InterPro" id="IPR006581">
    <property type="entry name" value="VPS10"/>
</dbReference>
<dbReference type="InterPro" id="IPR050310">
    <property type="entry name" value="VPS10-sortilin"/>
</dbReference>
<dbReference type="InterPro" id="IPR015943">
    <property type="entry name" value="WD40/YVTN_repeat-like_dom_sf"/>
</dbReference>
<dbReference type="PANTHER" id="PTHR12106">
    <property type="entry name" value="SORTILIN RELATED"/>
    <property type="match status" value="1"/>
</dbReference>
<dbReference type="PANTHER" id="PTHR12106:SF27">
    <property type="entry name" value="SORTILIN-RELATED RECEPTOR"/>
    <property type="match status" value="1"/>
</dbReference>
<dbReference type="Pfam" id="PF15902">
    <property type="entry name" value="Sortilin-Vps10"/>
    <property type="match status" value="2"/>
</dbReference>
<dbReference type="Pfam" id="PF15901">
    <property type="entry name" value="Sortilin_C"/>
    <property type="match status" value="2"/>
</dbReference>
<dbReference type="SMART" id="SM00602">
    <property type="entry name" value="VPS10"/>
    <property type="match status" value="2"/>
</dbReference>
<dbReference type="SUPFAM" id="SSF110296">
    <property type="entry name" value="Oligoxyloglucan reducing end-specific cellobiohydrolase"/>
    <property type="match status" value="2"/>
</dbReference>
<dbReference type="SUPFAM" id="SSF50939">
    <property type="entry name" value="Sialidases"/>
    <property type="match status" value="1"/>
</dbReference>
<feature type="signal peptide" evidence="2">
    <location>
        <begin position="1"/>
        <end position="22"/>
    </location>
</feature>
<feature type="chain" id="PRO_0000407506" description="Vacuolar protein sorting/targeting protein 10">
    <location>
        <begin position="23"/>
        <end position="1487"/>
    </location>
</feature>
<feature type="topological domain" description="Lumenal" evidence="2">
    <location>
        <begin position="23"/>
        <end position="1356"/>
    </location>
</feature>
<feature type="transmembrane region" description="Helical" evidence="2">
    <location>
        <begin position="1357"/>
        <end position="1377"/>
    </location>
</feature>
<feature type="topological domain" description="Cytoplasmic" evidence="2">
    <location>
        <begin position="1378"/>
        <end position="1409"/>
    </location>
</feature>
<feature type="transmembrane region" description="Helical" evidence="2">
    <location>
        <begin position="1410"/>
        <end position="1430"/>
    </location>
</feature>
<feature type="topological domain" description="Lumenal" evidence="2">
    <location>
        <begin position="1431"/>
        <end position="1487"/>
    </location>
</feature>
<feature type="repeat" description="BNR 1">
    <location>
        <begin position="61"/>
        <end position="71"/>
    </location>
</feature>
<feature type="repeat" description="BNR 2">
    <location>
        <begin position="378"/>
        <end position="387"/>
    </location>
</feature>
<feature type="repeat" description="BNR 3">
    <location>
        <begin position="438"/>
        <end position="448"/>
    </location>
</feature>
<feature type="repeat" description="BNR 4">
    <location>
        <begin position="479"/>
        <end position="489"/>
    </location>
</feature>
<feature type="repeat" description="BNR 5">
    <location>
        <begin position="721"/>
        <end position="731"/>
    </location>
</feature>
<feature type="repeat" description="BNR 6">
    <location>
        <begin position="816"/>
        <end position="826"/>
    </location>
</feature>
<feature type="repeat" description="BNR 7">
    <location>
        <begin position="1104"/>
        <end position="1114"/>
    </location>
</feature>
<feature type="repeat" description="BNR 8">
    <location>
        <begin position="1145"/>
        <end position="1155"/>
    </location>
</feature>
<feature type="glycosylation site" description="N-linked (GlcNAc...) asparagine" evidence="2">
    <location>
        <position position="300"/>
    </location>
</feature>
<feature type="glycosylation site" description="N-linked (GlcNAc...) asparagine" evidence="2">
    <location>
        <position position="324"/>
    </location>
</feature>
<feature type="glycosylation site" description="N-linked (GlcNAc...) asparagine" evidence="2">
    <location>
        <position position="967"/>
    </location>
</feature>
<feature type="glycosylation site" description="N-linked (GlcNAc...) asparagine" evidence="2">
    <location>
        <position position="1265"/>
    </location>
</feature>